<dbReference type="EMBL" id="AE016826">
    <property type="protein sequence ID" value="AAO26874.1"/>
    <property type="molecule type" value="Genomic_DNA"/>
</dbReference>
<dbReference type="RefSeq" id="WP_011091275.1">
    <property type="nucleotide sequence ID" value="NC_004545.1"/>
</dbReference>
<dbReference type="SMR" id="Q89AU8"/>
<dbReference type="STRING" id="224915.bbp_140"/>
<dbReference type="KEGG" id="bab:bbp_140"/>
<dbReference type="eggNOG" id="COG0268">
    <property type="taxonomic scope" value="Bacteria"/>
</dbReference>
<dbReference type="HOGENOM" id="CLU_160655_4_0_6"/>
<dbReference type="OrthoDB" id="9807974at2"/>
<dbReference type="Proteomes" id="UP000000601">
    <property type="component" value="Chromosome"/>
</dbReference>
<dbReference type="GO" id="GO:0005829">
    <property type="term" value="C:cytosol"/>
    <property type="evidence" value="ECO:0007669"/>
    <property type="project" value="TreeGrafter"/>
</dbReference>
<dbReference type="GO" id="GO:0015935">
    <property type="term" value="C:small ribosomal subunit"/>
    <property type="evidence" value="ECO:0007669"/>
    <property type="project" value="TreeGrafter"/>
</dbReference>
<dbReference type="GO" id="GO:0070181">
    <property type="term" value="F:small ribosomal subunit rRNA binding"/>
    <property type="evidence" value="ECO:0007669"/>
    <property type="project" value="TreeGrafter"/>
</dbReference>
<dbReference type="GO" id="GO:0003735">
    <property type="term" value="F:structural constituent of ribosome"/>
    <property type="evidence" value="ECO:0007669"/>
    <property type="project" value="InterPro"/>
</dbReference>
<dbReference type="GO" id="GO:0006412">
    <property type="term" value="P:translation"/>
    <property type="evidence" value="ECO:0007669"/>
    <property type="project" value="UniProtKB-UniRule"/>
</dbReference>
<dbReference type="FunFam" id="1.20.58.110:FF:000001">
    <property type="entry name" value="30S ribosomal protein S20"/>
    <property type="match status" value="1"/>
</dbReference>
<dbReference type="Gene3D" id="1.20.58.110">
    <property type="entry name" value="Ribosomal protein S20"/>
    <property type="match status" value="1"/>
</dbReference>
<dbReference type="HAMAP" id="MF_00500">
    <property type="entry name" value="Ribosomal_bS20"/>
    <property type="match status" value="1"/>
</dbReference>
<dbReference type="InterPro" id="IPR002583">
    <property type="entry name" value="Ribosomal_bS20"/>
</dbReference>
<dbReference type="InterPro" id="IPR036510">
    <property type="entry name" value="Ribosomal_bS20_sf"/>
</dbReference>
<dbReference type="NCBIfam" id="TIGR00029">
    <property type="entry name" value="S20"/>
    <property type="match status" value="1"/>
</dbReference>
<dbReference type="PANTHER" id="PTHR33398">
    <property type="entry name" value="30S RIBOSOMAL PROTEIN S20"/>
    <property type="match status" value="1"/>
</dbReference>
<dbReference type="PANTHER" id="PTHR33398:SF1">
    <property type="entry name" value="SMALL RIBOSOMAL SUBUNIT PROTEIN BS20C"/>
    <property type="match status" value="1"/>
</dbReference>
<dbReference type="Pfam" id="PF01649">
    <property type="entry name" value="Ribosomal_S20p"/>
    <property type="match status" value="1"/>
</dbReference>
<dbReference type="SUPFAM" id="SSF46992">
    <property type="entry name" value="Ribosomal protein S20"/>
    <property type="match status" value="1"/>
</dbReference>
<protein>
    <recommendedName>
        <fullName evidence="1">Small ribosomal subunit protein bS20</fullName>
    </recommendedName>
    <alternativeName>
        <fullName evidence="3">30S ribosomal protein S20</fullName>
    </alternativeName>
</protein>
<evidence type="ECO:0000255" key="1">
    <source>
        <dbReference type="HAMAP-Rule" id="MF_00500"/>
    </source>
</evidence>
<evidence type="ECO:0000256" key="2">
    <source>
        <dbReference type="SAM" id="MobiDB-lite"/>
    </source>
</evidence>
<evidence type="ECO:0000305" key="3"/>
<sequence>MANIKSSKKDSIKSRKKKKLNASKKSMIKTLIKKVKIAILSGDKLKSELAFSKIQPILDRYSAKGLIHKNKAARHKSNLKCKINAL</sequence>
<feature type="chain" id="PRO_0000167936" description="Small ribosomal subunit protein bS20">
    <location>
        <begin position="1"/>
        <end position="86"/>
    </location>
</feature>
<feature type="region of interest" description="Disordered" evidence="2">
    <location>
        <begin position="1"/>
        <end position="23"/>
    </location>
</feature>
<reference key="1">
    <citation type="journal article" date="2003" name="Proc. Natl. Acad. Sci. U.S.A.">
        <title>Reductive genome evolution in Buchnera aphidicola.</title>
        <authorList>
            <person name="van Ham R.C.H.J."/>
            <person name="Kamerbeek J."/>
            <person name="Palacios C."/>
            <person name="Rausell C."/>
            <person name="Abascal F."/>
            <person name="Bastolla U."/>
            <person name="Fernandez J.M."/>
            <person name="Jimenez L."/>
            <person name="Postigo M."/>
            <person name="Silva F.J."/>
            <person name="Tamames J."/>
            <person name="Viguera E."/>
            <person name="Latorre A."/>
            <person name="Valencia A."/>
            <person name="Moran F."/>
            <person name="Moya A."/>
        </authorList>
    </citation>
    <scope>NUCLEOTIDE SEQUENCE [LARGE SCALE GENOMIC DNA]</scope>
    <source>
        <strain>Bp</strain>
    </source>
</reference>
<comment type="function">
    <text evidence="1">Binds directly to 16S ribosomal RNA.</text>
</comment>
<comment type="similarity">
    <text evidence="1">Belongs to the bacterial ribosomal protein bS20 family.</text>
</comment>
<accession>Q89AU8</accession>
<keyword id="KW-1185">Reference proteome</keyword>
<keyword id="KW-0687">Ribonucleoprotein</keyword>
<keyword id="KW-0689">Ribosomal protein</keyword>
<keyword id="KW-0694">RNA-binding</keyword>
<keyword id="KW-0699">rRNA-binding</keyword>
<proteinExistence type="inferred from homology"/>
<organism>
    <name type="scientific">Buchnera aphidicola subsp. Baizongia pistaciae (strain Bp)</name>
    <dbReference type="NCBI Taxonomy" id="224915"/>
    <lineage>
        <taxon>Bacteria</taxon>
        <taxon>Pseudomonadati</taxon>
        <taxon>Pseudomonadota</taxon>
        <taxon>Gammaproteobacteria</taxon>
        <taxon>Enterobacterales</taxon>
        <taxon>Erwiniaceae</taxon>
        <taxon>Buchnera</taxon>
    </lineage>
</organism>
<name>RS20_BUCBP</name>
<gene>
    <name evidence="1" type="primary">rpsT</name>
    <name type="ordered locus">bbp_140</name>
</gene>